<evidence type="ECO:0000250" key="1">
    <source>
        <dbReference type="UniProtKB" id="P9WIP7"/>
    </source>
</evidence>
<evidence type="ECO:0000256" key="2">
    <source>
        <dbReference type="SAM" id="MobiDB-lite"/>
    </source>
</evidence>
<evidence type="ECO:0000305" key="3"/>
<name>LSR2_MYCTO</name>
<organism>
    <name type="scientific">Mycobacterium tuberculosis (strain CDC 1551 / Oshkosh)</name>
    <dbReference type="NCBI Taxonomy" id="83331"/>
    <lineage>
        <taxon>Bacteria</taxon>
        <taxon>Bacillati</taxon>
        <taxon>Actinomycetota</taxon>
        <taxon>Actinomycetes</taxon>
        <taxon>Mycobacteriales</taxon>
        <taxon>Mycobacteriaceae</taxon>
        <taxon>Mycobacterium</taxon>
        <taxon>Mycobacterium tuberculosis complex</taxon>
    </lineage>
</organism>
<proteinExistence type="inferred from homology"/>
<accession>P9WIP6</accession>
<accession>L0TG69</accession>
<accession>O06285</accession>
<accession>P65648</accession>
<gene>
    <name type="primary">lsr2</name>
    <name type="ordered locus">MT3704</name>
</gene>
<protein>
    <recommendedName>
        <fullName>Nucleoid-associated protein Lsr2</fullName>
    </recommendedName>
</protein>
<dbReference type="EMBL" id="AE000516">
    <property type="protein sequence ID" value="AAK48061.1"/>
    <property type="molecule type" value="Genomic_DNA"/>
</dbReference>
<dbReference type="PIR" id="F70954">
    <property type="entry name" value="F70954"/>
</dbReference>
<dbReference type="RefSeq" id="WP_003419513.1">
    <property type="nucleotide sequence ID" value="NZ_KK341227.1"/>
</dbReference>
<dbReference type="BMRB" id="P9WIP6"/>
<dbReference type="SMR" id="P9WIP6"/>
<dbReference type="GeneID" id="45427584"/>
<dbReference type="KEGG" id="mtc:MT3704"/>
<dbReference type="PATRIC" id="fig|83331.31.peg.3986"/>
<dbReference type="HOGENOM" id="CLU_139818_0_0_11"/>
<dbReference type="Proteomes" id="UP000001020">
    <property type="component" value="Chromosome"/>
</dbReference>
<dbReference type="GO" id="GO:0005737">
    <property type="term" value="C:cytoplasm"/>
    <property type="evidence" value="ECO:0007669"/>
    <property type="project" value="UniProtKB-KW"/>
</dbReference>
<dbReference type="GO" id="GO:0009295">
    <property type="term" value="C:nucleoid"/>
    <property type="evidence" value="ECO:0007669"/>
    <property type="project" value="UniProtKB-SubCell"/>
</dbReference>
<dbReference type="GO" id="GO:0016746">
    <property type="term" value="F:acyltransferase activity"/>
    <property type="evidence" value="ECO:0007669"/>
    <property type="project" value="InterPro"/>
</dbReference>
<dbReference type="GO" id="GO:0003677">
    <property type="term" value="F:DNA binding"/>
    <property type="evidence" value="ECO:0007669"/>
    <property type="project" value="UniProtKB-KW"/>
</dbReference>
<dbReference type="FunFam" id="3.30.60.230:FF:000001">
    <property type="entry name" value="Nucleoid-associated protein Lsr2"/>
    <property type="match status" value="1"/>
</dbReference>
<dbReference type="FunFam" id="4.10.320.10:FF:000004">
    <property type="entry name" value="Nucleoid-associated protein Lsr2"/>
    <property type="match status" value="1"/>
</dbReference>
<dbReference type="Gene3D" id="4.10.320.10">
    <property type="entry name" value="E3-binding domain"/>
    <property type="match status" value="1"/>
</dbReference>
<dbReference type="Gene3D" id="3.30.60.230">
    <property type="entry name" value="Lsr2, dimerization domain"/>
    <property type="match status" value="1"/>
</dbReference>
<dbReference type="InterPro" id="IPR036625">
    <property type="entry name" value="E3-bd_dom_sf"/>
</dbReference>
<dbReference type="InterPro" id="IPR042261">
    <property type="entry name" value="Lsr2-like_dimerization"/>
</dbReference>
<dbReference type="InterPro" id="IPR024412">
    <property type="entry name" value="Lsr2_dim_dom"/>
</dbReference>
<dbReference type="InterPro" id="IPR055370">
    <property type="entry name" value="Lsr2_DNA-bd"/>
</dbReference>
<dbReference type="Pfam" id="PF11774">
    <property type="entry name" value="Lsr2"/>
    <property type="match status" value="1"/>
</dbReference>
<dbReference type="Pfam" id="PF23359">
    <property type="entry name" value="Lsr2_DNA-bd"/>
    <property type="match status" value="1"/>
</dbReference>
<comment type="function">
    <text evidence="1">DNA-bridging protein that has both architectural and regulatory roles. Influences the organization of chromatin and gene expression by binding non-specifically to DNA, with a preference for AT-rich sequences, and bridging distant DNA segments. Represses expression of multiple genes involved in a broad range of cellular processes. May coordinate global gene regulation and virulence as well as genes important for adaptation to changing O(2) levels. Protects against reactive oxygen intermediates (By similarity).</text>
</comment>
<comment type="subunit">
    <text evidence="1">Homodimer. May form higher oligomers via protease-activation (By similarity).</text>
</comment>
<comment type="subcellular location">
    <subcellularLocation>
        <location evidence="1">Cytoplasm</location>
        <location evidence="1">Nucleoid</location>
    </subcellularLocation>
</comment>
<comment type="domain">
    <text evidence="1">The C-terminal domain binds DNA and the N-terminal domain is involved in dimerization. Both domains are essential for normal function (By similarity).</text>
</comment>
<comment type="PTM">
    <text evidence="1">The three N-terminal residues may be cleaved by proteases in response to external stress. This cleavage may be required for oligomerization, which leads to chromosome compaction and protection (By similarity).</text>
</comment>
<comment type="similarity">
    <text evidence="3">Belongs to the Lsr2 family.</text>
</comment>
<feature type="chain" id="PRO_0000427968" description="Nucleoid-associated protein Lsr2">
    <location>
        <begin position="1"/>
        <end position="112"/>
    </location>
</feature>
<feature type="DNA-binding region" evidence="1">
    <location>
        <begin position="97"/>
        <end position="102"/>
    </location>
</feature>
<feature type="region of interest" description="Disordered" evidence="2">
    <location>
        <begin position="57"/>
        <end position="79"/>
    </location>
</feature>
<sequence>MAKKVTVTLVDDFDGSGAADETVEFGLDGVTYEIDLSTKNATKLRGDLKQWVAAGRRVGGRRRGRSGSGRGRGAIDREQSAAIREWARRNGHNVSTRGRIPADVIDAYHAAT</sequence>
<reference key="1">
    <citation type="journal article" date="2002" name="J. Bacteriol.">
        <title>Whole-genome comparison of Mycobacterium tuberculosis clinical and laboratory strains.</title>
        <authorList>
            <person name="Fleischmann R.D."/>
            <person name="Alland D."/>
            <person name="Eisen J.A."/>
            <person name="Carpenter L."/>
            <person name="White O."/>
            <person name="Peterson J.D."/>
            <person name="DeBoy R.T."/>
            <person name="Dodson R.J."/>
            <person name="Gwinn M.L."/>
            <person name="Haft D.H."/>
            <person name="Hickey E.K."/>
            <person name="Kolonay J.F."/>
            <person name="Nelson W.C."/>
            <person name="Umayam L.A."/>
            <person name="Ermolaeva M.D."/>
            <person name="Salzberg S.L."/>
            <person name="Delcher A."/>
            <person name="Utterback T.R."/>
            <person name="Weidman J.F."/>
            <person name="Khouri H.M."/>
            <person name="Gill J."/>
            <person name="Mikula A."/>
            <person name="Bishai W."/>
            <person name="Jacobs W.R. Jr."/>
            <person name="Venter J.C."/>
            <person name="Fraser C.M."/>
        </authorList>
    </citation>
    <scope>NUCLEOTIDE SEQUENCE [LARGE SCALE GENOMIC DNA]</scope>
    <source>
        <strain>CDC 1551 / Oshkosh</strain>
    </source>
</reference>
<keyword id="KW-0963">Cytoplasm</keyword>
<keyword id="KW-0238">DNA-binding</keyword>
<keyword id="KW-1185">Reference proteome</keyword>
<keyword id="KW-0678">Repressor</keyword>
<keyword id="KW-0804">Transcription</keyword>
<keyword id="KW-0805">Transcription regulation</keyword>
<keyword id="KW-0843">Virulence</keyword>